<name>FABZ_LISIN</name>
<reference key="1">
    <citation type="journal article" date="2001" name="Science">
        <title>Comparative genomics of Listeria species.</title>
        <authorList>
            <person name="Glaser P."/>
            <person name="Frangeul L."/>
            <person name="Buchrieser C."/>
            <person name="Rusniok C."/>
            <person name="Amend A."/>
            <person name="Baquero F."/>
            <person name="Berche P."/>
            <person name="Bloecker H."/>
            <person name="Brandt P."/>
            <person name="Chakraborty T."/>
            <person name="Charbit A."/>
            <person name="Chetouani F."/>
            <person name="Couve E."/>
            <person name="de Daruvar A."/>
            <person name="Dehoux P."/>
            <person name="Domann E."/>
            <person name="Dominguez-Bernal G."/>
            <person name="Duchaud E."/>
            <person name="Durant L."/>
            <person name="Dussurget O."/>
            <person name="Entian K.-D."/>
            <person name="Fsihi H."/>
            <person name="Garcia-del Portillo F."/>
            <person name="Garrido P."/>
            <person name="Gautier L."/>
            <person name="Goebel W."/>
            <person name="Gomez-Lopez N."/>
            <person name="Hain T."/>
            <person name="Hauf J."/>
            <person name="Jackson D."/>
            <person name="Jones L.-M."/>
            <person name="Kaerst U."/>
            <person name="Kreft J."/>
            <person name="Kuhn M."/>
            <person name="Kunst F."/>
            <person name="Kurapkat G."/>
            <person name="Madueno E."/>
            <person name="Maitournam A."/>
            <person name="Mata Vicente J."/>
            <person name="Ng E."/>
            <person name="Nedjari H."/>
            <person name="Nordsiek G."/>
            <person name="Novella S."/>
            <person name="de Pablos B."/>
            <person name="Perez-Diaz J.-C."/>
            <person name="Purcell R."/>
            <person name="Remmel B."/>
            <person name="Rose M."/>
            <person name="Schlueter T."/>
            <person name="Simoes N."/>
            <person name="Tierrez A."/>
            <person name="Vazquez-Boland J.-A."/>
            <person name="Voss H."/>
            <person name="Wehland J."/>
            <person name="Cossart P."/>
        </authorList>
    </citation>
    <scope>NUCLEOTIDE SEQUENCE [LARGE SCALE GENOMIC DNA]</scope>
    <source>
        <strain>ATCC BAA-680 / CLIP 11262</strain>
    </source>
</reference>
<keyword id="KW-0963">Cytoplasm</keyword>
<keyword id="KW-0441">Lipid A biosynthesis</keyword>
<keyword id="KW-0444">Lipid biosynthesis</keyword>
<keyword id="KW-0443">Lipid metabolism</keyword>
<keyword id="KW-0456">Lyase</keyword>
<sequence length="144" mass="15858">MLDIKKIKEILPHRYPFLLVDRVISVEEGKKVTAIKNVTANEEFFNGHFPEYPVMPGVLIVEALAQTSGIAMMQSEANKGKIGLFAGIDGCRFKRQVVPGDQLLLEAEITRMRGAIAKAKVKATVEGDLVCEAEIMFALSDLPQ</sequence>
<dbReference type="EC" id="4.2.1.59" evidence="1"/>
<dbReference type="EMBL" id="AL596173">
    <property type="protein sequence ID" value="CAC97894.1"/>
    <property type="molecule type" value="Genomic_DNA"/>
</dbReference>
<dbReference type="PIR" id="AF1765">
    <property type="entry name" value="AF1765"/>
</dbReference>
<dbReference type="RefSeq" id="WP_003763977.1">
    <property type="nucleotide sequence ID" value="NC_003212.1"/>
</dbReference>
<dbReference type="SMR" id="Q927W9"/>
<dbReference type="STRING" id="272626.gene:17567048"/>
<dbReference type="GeneID" id="93235931"/>
<dbReference type="KEGG" id="lin:lin2668"/>
<dbReference type="eggNOG" id="COG0764">
    <property type="taxonomic scope" value="Bacteria"/>
</dbReference>
<dbReference type="HOGENOM" id="CLU_078912_3_0_9"/>
<dbReference type="OrthoDB" id="9772788at2"/>
<dbReference type="Proteomes" id="UP000002513">
    <property type="component" value="Chromosome"/>
</dbReference>
<dbReference type="GO" id="GO:0005737">
    <property type="term" value="C:cytoplasm"/>
    <property type="evidence" value="ECO:0007669"/>
    <property type="project" value="UniProtKB-SubCell"/>
</dbReference>
<dbReference type="GO" id="GO:0016020">
    <property type="term" value="C:membrane"/>
    <property type="evidence" value="ECO:0007669"/>
    <property type="project" value="GOC"/>
</dbReference>
<dbReference type="GO" id="GO:0019171">
    <property type="term" value="F:(3R)-hydroxyacyl-[acyl-carrier-protein] dehydratase activity"/>
    <property type="evidence" value="ECO:0007669"/>
    <property type="project" value="UniProtKB-EC"/>
</dbReference>
<dbReference type="GO" id="GO:0006633">
    <property type="term" value="P:fatty acid biosynthetic process"/>
    <property type="evidence" value="ECO:0007669"/>
    <property type="project" value="UniProtKB-UniRule"/>
</dbReference>
<dbReference type="GO" id="GO:0009245">
    <property type="term" value="P:lipid A biosynthetic process"/>
    <property type="evidence" value="ECO:0007669"/>
    <property type="project" value="UniProtKB-UniRule"/>
</dbReference>
<dbReference type="CDD" id="cd01288">
    <property type="entry name" value="FabZ"/>
    <property type="match status" value="1"/>
</dbReference>
<dbReference type="FunFam" id="3.10.129.10:FF:000001">
    <property type="entry name" value="3-hydroxyacyl-[acyl-carrier-protein] dehydratase FabZ"/>
    <property type="match status" value="1"/>
</dbReference>
<dbReference type="Gene3D" id="3.10.129.10">
    <property type="entry name" value="Hotdog Thioesterase"/>
    <property type="match status" value="1"/>
</dbReference>
<dbReference type="HAMAP" id="MF_00406">
    <property type="entry name" value="FabZ"/>
    <property type="match status" value="1"/>
</dbReference>
<dbReference type="InterPro" id="IPR013114">
    <property type="entry name" value="FabA_FabZ"/>
</dbReference>
<dbReference type="InterPro" id="IPR010084">
    <property type="entry name" value="FabZ"/>
</dbReference>
<dbReference type="InterPro" id="IPR029069">
    <property type="entry name" value="HotDog_dom_sf"/>
</dbReference>
<dbReference type="NCBIfam" id="TIGR01750">
    <property type="entry name" value="fabZ"/>
    <property type="match status" value="1"/>
</dbReference>
<dbReference type="NCBIfam" id="NF000582">
    <property type="entry name" value="PRK00006.1"/>
    <property type="match status" value="1"/>
</dbReference>
<dbReference type="PANTHER" id="PTHR30272">
    <property type="entry name" value="3-HYDROXYACYL-[ACYL-CARRIER-PROTEIN] DEHYDRATASE"/>
    <property type="match status" value="1"/>
</dbReference>
<dbReference type="PANTHER" id="PTHR30272:SF1">
    <property type="entry name" value="3-HYDROXYACYL-[ACYL-CARRIER-PROTEIN] DEHYDRATASE"/>
    <property type="match status" value="1"/>
</dbReference>
<dbReference type="Pfam" id="PF07977">
    <property type="entry name" value="FabA"/>
    <property type="match status" value="1"/>
</dbReference>
<dbReference type="SUPFAM" id="SSF54637">
    <property type="entry name" value="Thioesterase/thiol ester dehydrase-isomerase"/>
    <property type="match status" value="1"/>
</dbReference>
<gene>
    <name evidence="1" type="primary">fabZ</name>
    <name type="ordered locus">lin2668</name>
</gene>
<organism>
    <name type="scientific">Listeria innocua serovar 6a (strain ATCC BAA-680 / CLIP 11262)</name>
    <dbReference type="NCBI Taxonomy" id="272626"/>
    <lineage>
        <taxon>Bacteria</taxon>
        <taxon>Bacillati</taxon>
        <taxon>Bacillota</taxon>
        <taxon>Bacilli</taxon>
        <taxon>Bacillales</taxon>
        <taxon>Listeriaceae</taxon>
        <taxon>Listeria</taxon>
    </lineage>
</organism>
<feature type="chain" id="PRO_0000091697" description="3-hydroxyacyl-[acyl-carrier-protein] dehydratase FabZ">
    <location>
        <begin position="1"/>
        <end position="144"/>
    </location>
</feature>
<feature type="active site" evidence="1">
    <location>
        <position position="48"/>
    </location>
</feature>
<accession>Q927W9</accession>
<protein>
    <recommendedName>
        <fullName evidence="1">3-hydroxyacyl-[acyl-carrier-protein] dehydratase FabZ</fullName>
        <ecNumber evidence="1">4.2.1.59</ecNumber>
    </recommendedName>
    <alternativeName>
        <fullName evidence="1">(3R)-hydroxymyristoyl-[acyl-carrier-protein] dehydratase</fullName>
        <shortName evidence="1">(3R)-hydroxymyristoyl-ACP dehydrase</shortName>
    </alternativeName>
    <alternativeName>
        <fullName evidence="1">Beta-hydroxyacyl-ACP dehydratase</fullName>
    </alternativeName>
</protein>
<comment type="function">
    <text evidence="1">Involved in unsaturated fatty acids biosynthesis. Catalyzes the dehydration of short chain beta-hydroxyacyl-ACPs and long chain saturated and unsaturated beta-hydroxyacyl-ACPs.</text>
</comment>
<comment type="catalytic activity">
    <reaction evidence="1">
        <text>a (3R)-hydroxyacyl-[ACP] = a (2E)-enoyl-[ACP] + H2O</text>
        <dbReference type="Rhea" id="RHEA:13097"/>
        <dbReference type="Rhea" id="RHEA-COMP:9925"/>
        <dbReference type="Rhea" id="RHEA-COMP:9945"/>
        <dbReference type="ChEBI" id="CHEBI:15377"/>
        <dbReference type="ChEBI" id="CHEBI:78784"/>
        <dbReference type="ChEBI" id="CHEBI:78827"/>
        <dbReference type="EC" id="4.2.1.59"/>
    </reaction>
</comment>
<comment type="subcellular location">
    <subcellularLocation>
        <location evidence="1">Cytoplasm</location>
    </subcellularLocation>
</comment>
<comment type="similarity">
    <text evidence="1">Belongs to the thioester dehydratase family. FabZ subfamily.</text>
</comment>
<proteinExistence type="inferred from homology"/>
<evidence type="ECO:0000255" key="1">
    <source>
        <dbReference type="HAMAP-Rule" id="MF_00406"/>
    </source>
</evidence>